<proteinExistence type="inferred from homology"/>
<organism>
    <name type="scientific">Pseudomonas aeruginosa (strain LESB58)</name>
    <dbReference type="NCBI Taxonomy" id="557722"/>
    <lineage>
        <taxon>Bacteria</taxon>
        <taxon>Pseudomonadati</taxon>
        <taxon>Pseudomonadota</taxon>
        <taxon>Gammaproteobacteria</taxon>
        <taxon>Pseudomonadales</taxon>
        <taxon>Pseudomonadaceae</taxon>
        <taxon>Pseudomonas</taxon>
    </lineage>
</organism>
<evidence type="ECO:0000255" key="1">
    <source>
        <dbReference type="HAMAP-Rule" id="MF_00323"/>
    </source>
</evidence>
<sequence length="340" mass="38572">MTENALLLLNLGSPDSTRVEDVRRYLDQFLMDPYVVDLPWPLRRLLVSLILIKRPAESAHAYSSIWWDEGSPLIVLSRRLQEAMKPHWPHGPVELAMRYGQPAIEKVLLDLARRGIRRVTLAPLYPQFADSTTTTAEQEVRRVIAAHRLGLEVSTLPPFYDQPVYLDALVESVRPYLQQPHDHLLLSFHGLPERHIRKLVKDPAHDLLAENSRNVSPEALALCYRSQCLRTAEAFAERAGLEQGRWSVSFQSRLGRAKWIEPYTDAKLDELVQRGVKRLLVMCPAFVADCIETLEEIGMRGREQFISAGGEDLVLIPCLNDHPAWVGALAEMSGRLARPL</sequence>
<name>HEMH_PSEA8</name>
<protein>
    <recommendedName>
        <fullName evidence="1">Ferrochelatase</fullName>
        <ecNumber evidence="1">4.98.1.1</ecNumber>
    </recommendedName>
    <alternativeName>
        <fullName evidence="1">Heme synthase</fullName>
    </alternativeName>
    <alternativeName>
        <fullName evidence="1">Protoheme ferro-lyase</fullName>
    </alternativeName>
</protein>
<gene>
    <name evidence="1" type="primary">hemH</name>
    <name type="ordered locus">PLES_50411</name>
</gene>
<dbReference type="EC" id="4.98.1.1" evidence="1"/>
<dbReference type="EMBL" id="FM209186">
    <property type="protein sequence ID" value="CAW29795.1"/>
    <property type="molecule type" value="Genomic_DNA"/>
</dbReference>
<dbReference type="RefSeq" id="WP_003099324.1">
    <property type="nucleotide sequence ID" value="NC_011770.1"/>
</dbReference>
<dbReference type="SMR" id="B7V0K1"/>
<dbReference type="KEGG" id="pag:PLES_50411"/>
<dbReference type="HOGENOM" id="CLU_018884_0_1_6"/>
<dbReference type="UniPathway" id="UPA00252">
    <property type="reaction ID" value="UER00325"/>
</dbReference>
<dbReference type="GO" id="GO:0005737">
    <property type="term" value="C:cytoplasm"/>
    <property type="evidence" value="ECO:0007669"/>
    <property type="project" value="UniProtKB-SubCell"/>
</dbReference>
<dbReference type="GO" id="GO:0004325">
    <property type="term" value="F:ferrochelatase activity"/>
    <property type="evidence" value="ECO:0007669"/>
    <property type="project" value="UniProtKB-UniRule"/>
</dbReference>
<dbReference type="GO" id="GO:0046872">
    <property type="term" value="F:metal ion binding"/>
    <property type="evidence" value="ECO:0007669"/>
    <property type="project" value="UniProtKB-KW"/>
</dbReference>
<dbReference type="GO" id="GO:0006783">
    <property type="term" value="P:heme biosynthetic process"/>
    <property type="evidence" value="ECO:0007669"/>
    <property type="project" value="UniProtKB-UniRule"/>
</dbReference>
<dbReference type="CDD" id="cd00419">
    <property type="entry name" value="Ferrochelatase_C"/>
    <property type="match status" value="1"/>
</dbReference>
<dbReference type="CDD" id="cd03411">
    <property type="entry name" value="Ferrochelatase_N"/>
    <property type="match status" value="1"/>
</dbReference>
<dbReference type="FunFam" id="3.40.50.1400:FF:000012">
    <property type="entry name" value="Ferrochelatase"/>
    <property type="match status" value="1"/>
</dbReference>
<dbReference type="Gene3D" id="3.40.50.1400">
    <property type="match status" value="2"/>
</dbReference>
<dbReference type="HAMAP" id="MF_00323">
    <property type="entry name" value="Ferrochelatase"/>
    <property type="match status" value="1"/>
</dbReference>
<dbReference type="InterPro" id="IPR001015">
    <property type="entry name" value="Ferrochelatase"/>
</dbReference>
<dbReference type="InterPro" id="IPR033644">
    <property type="entry name" value="Ferrochelatase_C"/>
</dbReference>
<dbReference type="InterPro" id="IPR033659">
    <property type="entry name" value="Ferrochelatase_N"/>
</dbReference>
<dbReference type="NCBIfam" id="TIGR00109">
    <property type="entry name" value="hemH"/>
    <property type="match status" value="1"/>
</dbReference>
<dbReference type="PANTHER" id="PTHR11108">
    <property type="entry name" value="FERROCHELATASE"/>
    <property type="match status" value="1"/>
</dbReference>
<dbReference type="PANTHER" id="PTHR11108:SF1">
    <property type="entry name" value="FERROCHELATASE, MITOCHONDRIAL"/>
    <property type="match status" value="1"/>
</dbReference>
<dbReference type="Pfam" id="PF00762">
    <property type="entry name" value="Ferrochelatase"/>
    <property type="match status" value="1"/>
</dbReference>
<dbReference type="SUPFAM" id="SSF53800">
    <property type="entry name" value="Chelatase"/>
    <property type="match status" value="1"/>
</dbReference>
<reference key="1">
    <citation type="journal article" date="2009" name="Genome Res.">
        <title>Newly introduced genomic prophage islands are critical determinants of in vivo competitiveness in the Liverpool epidemic strain of Pseudomonas aeruginosa.</title>
        <authorList>
            <person name="Winstanley C."/>
            <person name="Langille M.G.I."/>
            <person name="Fothergill J.L."/>
            <person name="Kukavica-Ibrulj I."/>
            <person name="Paradis-Bleau C."/>
            <person name="Sanschagrin F."/>
            <person name="Thomson N.R."/>
            <person name="Winsor G.L."/>
            <person name="Quail M.A."/>
            <person name="Lennard N."/>
            <person name="Bignell A."/>
            <person name="Clarke L."/>
            <person name="Seeger K."/>
            <person name="Saunders D."/>
            <person name="Harris D."/>
            <person name="Parkhill J."/>
            <person name="Hancock R.E.W."/>
            <person name="Brinkman F.S.L."/>
            <person name="Levesque R.C."/>
        </authorList>
    </citation>
    <scope>NUCLEOTIDE SEQUENCE [LARGE SCALE GENOMIC DNA]</scope>
    <source>
        <strain>LESB58</strain>
    </source>
</reference>
<comment type="function">
    <text evidence="1">Catalyzes the ferrous insertion into protoporphyrin IX.</text>
</comment>
<comment type="catalytic activity">
    <reaction evidence="1">
        <text>heme b + 2 H(+) = protoporphyrin IX + Fe(2+)</text>
        <dbReference type="Rhea" id="RHEA:22584"/>
        <dbReference type="ChEBI" id="CHEBI:15378"/>
        <dbReference type="ChEBI" id="CHEBI:29033"/>
        <dbReference type="ChEBI" id="CHEBI:57306"/>
        <dbReference type="ChEBI" id="CHEBI:60344"/>
        <dbReference type="EC" id="4.98.1.1"/>
    </reaction>
</comment>
<comment type="pathway">
    <text evidence="1">Porphyrin-containing compound metabolism; protoheme biosynthesis; protoheme from protoporphyrin-IX: step 1/1.</text>
</comment>
<comment type="subcellular location">
    <subcellularLocation>
        <location evidence="1">Cytoplasm</location>
    </subcellularLocation>
</comment>
<comment type="similarity">
    <text evidence="1">Belongs to the ferrochelatase family.</text>
</comment>
<keyword id="KW-0963">Cytoplasm</keyword>
<keyword id="KW-0350">Heme biosynthesis</keyword>
<keyword id="KW-0408">Iron</keyword>
<keyword id="KW-0456">Lyase</keyword>
<keyword id="KW-0479">Metal-binding</keyword>
<keyword id="KW-0627">Porphyrin biosynthesis</keyword>
<feature type="chain" id="PRO_1000119613" description="Ferrochelatase">
    <location>
        <begin position="1"/>
        <end position="340"/>
    </location>
</feature>
<feature type="binding site" evidence="1">
    <location>
        <position position="189"/>
    </location>
    <ligand>
        <name>Fe cation</name>
        <dbReference type="ChEBI" id="CHEBI:24875"/>
    </ligand>
</feature>
<feature type="binding site" evidence="1">
    <location>
        <position position="292"/>
    </location>
    <ligand>
        <name>Fe cation</name>
        <dbReference type="ChEBI" id="CHEBI:24875"/>
    </ligand>
</feature>
<accession>B7V0K1</accession>